<sequence length="277" mass="31398">MKTIILFVTFLALSSSSLADETETEFHYKPGEIADPSKWSSIKAEWKICGTGKRQSPINLTPKIARIVHNSTEILQTYYKPVEAILKNRGFDMKVKWEDDAGKIVINDTDYKLVQSHWHAPSEHFLDGQRLAMELHMVHKSVEGHLAVIGVLFREGEPNAFISRIMDKIHKIADVQDGEVSIGKIDPREFGWDLTKFYEYRGSLTTPPCTEDVMWTIINKVGTVSREQIDVLTDARRGGYEKNARPAQPLNGRLVYLNEQSSPSPTPRLRIPRVGPV</sequence>
<organism>
    <name type="scientific">Arabidopsis thaliana</name>
    <name type="common">Mouse-ear cress</name>
    <dbReference type="NCBI Taxonomy" id="3702"/>
    <lineage>
        <taxon>Eukaryota</taxon>
        <taxon>Viridiplantae</taxon>
        <taxon>Streptophyta</taxon>
        <taxon>Embryophyta</taxon>
        <taxon>Tracheophyta</taxon>
        <taxon>Spermatophyta</taxon>
        <taxon>Magnoliopsida</taxon>
        <taxon>eudicotyledons</taxon>
        <taxon>Gunneridae</taxon>
        <taxon>Pentapetalae</taxon>
        <taxon>rosids</taxon>
        <taxon>malvids</taxon>
        <taxon>Brassicales</taxon>
        <taxon>Brassicaceae</taxon>
        <taxon>Camelineae</taxon>
        <taxon>Arabidopsis</taxon>
    </lineage>
</organism>
<dbReference type="EC" id="4.2.1.1"/>
<dbReference type="EMBL" id="AL391716">
    <property type="protein sequence ID" value="CAC05500.1"/>
    <property type="molecule type" value="Genomic_DNA"/>
</dbReference>
<dbReference type="EMBL" id="CP002688">
    <property type="protein sequence ID" value="AED90708.1"/>
    <property type="molecule type" value="Genomic_DNA"/>
</dbReference>
<dbReference type="EMBL" id="DQ446916">
    <property type="protein sequence ID" value="ABE66129.1"/>
    <property type="molecule type" value="mRNA"/>
</dbReference>
<dbReference type="EMBL" id="DQ653263">
    <property type="protein sequence ID" value="ABK28680.1"/>
    <property type="status" value="ALT_SEQ"/>
    <property type="molecule type" value="mRNA"/>
</dbReference>
<dbReference type="EMBL" id="AK221569">
    <property type="protein sequence ID" value="BAD95018.1"/>
    <property type="molecule type" value="mRNA"/>
</dbReference>
<dbReference type="EMBL" id="AY088872">
    <property type="protein sequence ID" value="AAM67178.1"/>
    <property type="molecule type" value="mRNA"/>
</dbReference>
<dbReference type="RefSeq" id="NP_196038.1">
    <property type="nucleotide sequence ID" value="NM_120500.3"/>
</dbReference>
<dbReference type="SMR" id="Q9FYE3"/>
<dbReference type="FunCoup" id="Q9FYE3">
    <property type="interactions" value="68"/>
</dbReference>
<dbReference type="STRING" id="3702.Q9FYE3"/>
<dbReference type="GlyCosmos" id="Q9FYE3">
    <property type="glycosylation" value="2 sites, No reported glycans"/>
</dbReference>
<dbReference type="GlyGen" id="Q9FYE3">
    <property type="glycosylation" value="3 sites"/>
</dbReference>
<dbReference type="PaxDb" id="3702-AT5G04180.1"/>
<dbReference type="ProteomicsDB" id="246723"/>
<dbReference type="EnsemblPlants" id="AT5G04180.1">
    <property type="protein sequence ID" value="AT5G04180.1"/>
    <property type="gene ID" value="AT5G04180"/>
</dbReference>
<dbReference type="GeneID" id="830296"/>
<dbReference type="Gramene" id="AT5G04180.1">
    <property type="protein sequence ID" value="AT5G04180.1"/>
    <property type="gene ID" value="AT5G04180"/>
</dbReference>
<dbReference type="KEGG" id="ath:AT5G04180"/>
<dbReference type="Araport" id="AT5G04180"/>
<dbReference type="TAIR" id="AT5G04180">
    <property type="gene designation" value="ACA3"/>
</dbReference>
<dbReference type="eggNOG" id="KOG0382">
    <property type="taxonomic scope" value="Eukaryota"/>
</dbReference>
<dbReference type="HOGENOM" id="CLU_039326_0_0_1"/>
<dbReference type="InParanoid" id="Q9FYE3"/>
<dbReference type="OMA" id="LVYATEW"/>
<dbReference type="OrthoDB" id="429145at2759"/>
<dbReference type="PhylomeDB" id="Q9FYE3"/>
<dbReference type="BioCyc" id="ARA:AT5G04180-MONOMER"/>
<dbReference type="PRO" id="PR:Q9FYE3"/>
<dbReference type="Proteomes" id="UP000006548">
    <property type="component" value="Chromosome 5"/>
</dbReference>
<dbReference type="ExpressionAtlas" id="Q9FYE3">
    <property type="expression patterns" value="baseline and differential"/>
</dbReference>
<dbReference type="GO" id="GO:0009570">
    <property type="term" value="C:chloroplast stroma"/>
    <property type="evidence" value="ECO:0007669"/>
    <property type="project" value="UniProtKB-SubCell"/>
</dbReference>
<dbReference type="GO" id="GO:0004089">
    <property type="term" value="F:carbonate dehydratase activity"/>
    <property type="evidence" value="ECO:0007669"/>
    <property type="project" value="UniProtKB-EC"/>
</dbReference>
<dbReference type="GO" id="GO:0008270">
    <property type="term" value="F:zinc ion binding"/>
    <property type="evidence" value="ECO:0007669"/>
    <property type="project" value="InterPro"/>
</dbReference>
<dbReference type="GO" id="GO:0010037">
    <property type="term" value="P:response to carbon dioxide"/>
    <property type="evidence" value="ECO:0000270"/>
    <property type="project" value="TAIR"/>
</dbReference>
<dbReference type="CDD" id="cd03124">
    <property type="entry name" value="alpha_CA_prokaryotic_like"/>
    <property type="match status" value="1"/>
</dbReference>
<dbReference type="FunFam" id="3.10.200.10:FF:000007">
    <property type="entry name" value="Alpha carbonic anhydrase 3"/>
    <property type="match status" value="1"/>
</dbReference>
<dbReference type="Gene3D" id="3.10.200.10">
    <property type="entry name" value="Alpha carbonic anhydrase"/>
    <property type="match status" value="1"/>
</dbReference>
<dbReference type="InterPro" id="IPR041891">
    <property type="entry name" value="Alpha_CA_prokaryot-like"/>
</dbReference>
<dbReference type="InterPro" id="IPR001148">
    <property type="entry name" value="CA_dom"/>
</dbReference>
<dbReference type="InterPro" id="IPR036398">
    <property type="entry name" value="CA_dom_sf"/>
</dbReference>
<dbReference type="InterPro" id="IPR023561">
    <property type="entry name" value="Carbonic_anhydrase_a-class"/>
</dbReference>
<dbReference type="PANTHER" id="PTHR18952:SF267">
    <property type="entry name" value="ALPHA CARBONIC ANHYDRASE 3"/>
    <property type="match status" value="1"/>
</dbReference>
<dbReference type="PANTHER" id="PTHR18952">
    <property type="entry name" value="CARBONIC ANHYDRASE"/>
    <property type="match status" value="1"/>
</dbReference>
<dbReference type="Pfam" id="PF00194">
    <property type="entry name" value="Carb_anhydrase"/>
    <property type="match status" value="1"/>
</dbReference>
<dbReference type="SMART" id="SM01057">
    <property type="entry name" value="Carb_anhydrase"/>
    <property type="match status" value="1"/>
</dbReference>
<dbReference type="SUPFAM" id="SSF51069">
    <property type="entry name" value="Carbonic anhydrase"/>
    <property type="match status" value="1"/>
</dbReference>
<dbReference type="PROSITE" id="PS51144">
    <property type="entry name" value="ALPHA_CA_2"/>
    <property type="match status" value="1"/>
</dbReference>
<name>ATCA3_ARATH</name>
<comment type="function">
    <text evidence="1">Reversible hydration of carbon dioxide.</text>
</comment>
<comment type="catalytic activity">
    <reaction>
        <text>hydrogencarbonate + H(+) = CO2 + H2O</text>
        <dbReference type="Rhea" id="RHEA:10748"/>
        <dbReference type="ChEBI" id="CHEBI:15377"/>
        <dbReference type="ChEBI" id="CHEBI:15378"/>
        <dbReference type="ChEBI" id="CHEBI:16526"/>
        <dbReference type="ChEBI" id="CHEBI:17544"/>
        <dbReference type="EC" id="4.2.1.1"/>
    </reaction>
</comment>
<comment type="cofactor">
    <cofactor evidence="1">
        <name>Zn(2+)</name>
        <dbReference type="ChEBI" id="CHEBI:29105"/>
    </cofactor>
</comment>
<comment type="subcellular location">
    <subcellularLocation>
        <location evidence="1">Plastid</location>
        <location evidence="1">Chloroplast stroma</location>
    </subcellularLocation>
    <text evidence="1">Targeted to the chloroplast via a protein-targeting pathway that uses the secretory system.</text>
</comment>
<comment type="tissue specificity">
    <text evidence="5">Expressed in flowers and siliques.</text>
</comment>
<comment type="induction">
    <text evidence="5">Accumulates in low CO(2) conditions.</text>
</comment>
<comment type="PTM">
    <text evidence="1">N-glycosylated.</text>
</comment>
<comment type="similarity">
    <text evidence="6">Belongs to the alpha-class carbonic anhydrase family.</text>
</comment>
<comment type="sequence caution" evidence="6">
    <conflict type="erroneous termination">
        <sequence resource="EMBL-CDS" id="ABK28680"/>
    </conflict>
    <text>Extended C-terminus.</text>
</comment>
<feature type="signal peptide" evidence="2">
    <location>
        <begin position="1"/>
        <end position="19"/>
    </location>
</feature>
<feature type="chain" id="PRO_0000429729" description="Alpha carbonic anhydrase 3">
    <location>
        <begin position="20"/>
        <end position="277"/>
    </location>
</feature>
<feature type="domain" description="Alpha-carbonic anhydrase" evidence="3">
    <location>
        <begin position="24"/>
        <end position="259"/>
    </location>
</feature>
<feature type="region of interest" description="Disordered" evidence="4">
    <location>
        <begin position="257"/>
        <end position="277"/>
    </location>
</feature>
<feature type="binding site" evidence="3">
    <location>
        <position position="117"/>
    </location>
    <ligand>
        <name>Zn(2+)</name>
        <dbReference type="ChEBI" id="CHEBI:29105"/>
        <note>catalytic</note>
    </ligand>
</feature>
<feature type="binding site" evidence="3">
    <location>
        <position position="119"/>
    </location>
    <ligand>
        <name>Zn(2+)</name>
        <dbReference type="ChEBI" id="CHEBI:29105"/>
        <note>catalytic</note>
    </ligand>
</feature>
<feature type="binding site" evidence="3">
    <location>
        <position position="136"/>
    </location>
    <ligand>
        <name>Zn(2+)</name>
        <dbReference type="ChEBI" id="CHEBI:29105"/>
        <note>catalytic</note>
    </ligand>
</feature>
<feature type="binding site" evidence="1">
    <location>
        <begin position="205"/>
        <end position="206"/>
    </location>
    <ligand>
        <name>substrate</name>
    </ligand>
</feature>
<feature type="glycosylation site" description="N-linked (GlcNAc...) asparagine" evidence="2">
    <location>
        <position position="70"/>
    </location>
</feature>
<feature type="glycosylation site" description="N-linked (GlcNAc...) asparagine" evidence="2">
    <location>
        <position position="107"/>
    </location>
</feature>
<feature type="disulfide bond" evidence="1">
    <location>
        <begin position="49"/>
        <end position="209"/>
    </location>
</feature>
<accession>Q9FYE3</accession>
<accession>A0MFD7</accession>
<keyword id="KW-0150">Chloroplast</keyword>
<keyword id="KW-1015">Disulfide bond</keyword>
<keyword id="KW-0325">Glycoprotein</keyword>
<keyword id="KW-0456">Lyase</keyword>
<keyword id="KW-0479">Metal-binding</keyword>
<keyword id="KW-0934">Plastid</keyword>
<keyword id="KW-1185">Reference proteome</keyword>
<keyword id="KW-0732">Signal</keyword>
<keyword id="KW-0862">Zinc</keyword>
<proteinExistence type="evidence at transcript level"/>
<evidence type="ECO:0000250" key="1"/>
<evidence type="ECO:0000255" key="2"/>
<evidence type="ECO:0000255" key="3">
    <source>
        <dbReference type="PROSITE-ProRule" id="PRU01134"/>
    </source>
</evidence>
<evidence type="ECO:0000256" key="4">
    <source>
        <dbReference type="SAM" id="MobiDB-lite"/>
    </source>
</evidence>
<evidence type="ECO:0000269" key="5">
    <source>
    </source>
</evidence>
<evidence type="ECO:0000305" key="6"/>
<reference key="1">
    <citation type="journal article" date="2000" name="Nature">
        <title>Sequence and analysis of chromosome 5 of the plant Arabidopsis thaliana.</title>
        <authorList>
            <person name="Tabata S."/>
            <person name="Kaneko T."/>
            <person name="Nakamura Y."/>
            <person name="Kotani H."/>
            <person name="Kato T."/>
            <person name="Asamizu E."/>
            <person name="Miyajima N."/>
            <person name="Sasamoto S."/>
            <person name="Kimura T."/>
            <person name="Hosouchi T."/>
            <person name="Kawashima K."/>
            <person name="Kohara M."/>
            <person name="Matsumoto M."/>
            <person name="Matsuno A."/>
            <person name="Muraki A."/>
            <person name="Nakayama S."/>
            <person name="Nakazaki N."/>
            <person name="Naruo K."/>
            <person name="Okumura S."/>
            <person name="Shinpo S."/>
            <person name="Takeuchi C."/>
            <person name="Wada T."/>
            <person name="Watanabe A."/>
            <person name="Yamada M."/>
            <person name="Yasuda M."/>
            <person name="Sato S."/>
            <person name="de la Bastide M."/>
            <person name="Huang E."/>
            <person name="Spiegel L."/>
            <person name="Gnoj L."/>
            <person name="O'Shaughnessy A."/>
            <person name="Preston R."/>
            <person name="Habermann K."/>
            <person name="Murray J."/>
            <person name="Johnson D."/>
            <person name="Rohlfing T."/>
            <person name="Nelson J."/>
            <person name="Stoneking T."/>
            <person name="Pepin K."/>
            <person name="Spieth J."/>
            <person name="Sekhon M."/>
            <person name="Armstrong J."/>
            <person name="Becker M."/>
            <person name="Belter E."/>
            <person name="Cordum H."/>
            <person name="Cordes M."/>
            <person name="Courtney L."/>
            <person name="Courtney W."/>
            <person name="Dante M."/>
            <person name="Du H."/>
            <person name="Edwards J."/>
            <person name="Fryman J."/>
            <person name="Haakensen B."/>
            <person name="Lamar E."/>
            <person name="Latreille P."/>
            <person name="Leonard S."/>
            <person name="Meyer R."/>
            <person name="Mulvaney E."/>
            <person name="Ozersky P."/>
            <person name="Riley A."/>
            <person name="Strowmatt C."/>
            <person name="Wagner-McPherson C."/>
            <person name="Wollam A."/>
            <person name="Yoakum M."/>
            <person name="Bell M."/>
            <person name="Dedhia N."/>
            <person name="Parnell L."/>
            <person name="Shah R."/>
            <person name="Rodriguez M."/>
            <person name="Hoon See L."/>
            <person name="Vil D."/>
            <person name="Baker J."/>
            <person name="Kirchoff K."/>
            <person name="Toth K."/>
            <person name="King L."/>
            <person name="Bahret A."/>
            <person name="Miller B."/>
            <person name="Marra M.A."/>
            <person name="Martienssen R."/>
            <person name="McCombie W.R."/>
            <person name="Wilson R.K."/>
            <person name="Murphy G."/>
            <person name="Bancroft I."/>
            <person name="Volckaert G."/>
            <person name="Wambutt R."/>
            <person name="Duesterhoeft A."/>
            <person name="Stiekema W."/>
            <person name="Pohl T."/>
            <person name="Entian K.-D."/>
            <person name="Terryn N."/>
            <person name="Hartley N."/>
            <person name="Bent E."/>
            <person name="Johnson S."/>
            <person name="Langham S.-A."/>
            <person name="McCullagh B."/>
            <person name="Robben J."/>
            <person name="Grymonprez B."/>
            <person name="Zimmermann W."/>
            <person name="Ramsperger U."/>
            <person name="Wedler H."/>
            <person name="Balke K."/>
            <person name="Wedler E."/>
            <person name="Peters S."/>
            <person name="van Staveren M."/>
            <person name="Dirkse W."/>
            <person name="Mooijman P."/>
            <person name="Klein Lankhorst R."/>
            <person name="Weitzenegger T."/>
            <person name="Bothe G."/>
            <person name="Rose M."/>
            <person name="Hauf J."/>
            <person name="Berneiser S."/>
            <person name="Hempel S."/>
            <person name="Feldpausch M."/>
            <person name="Lamberth S."/>
            <person name="Villarroel R."/>
            <person name="Gielen J."/>
            <person name="Ardiles W."/>
            <person name="Bents O."/>
            <person name="Lemcke K."/>
            <person name="Kolesov G."/>
            <person name="Mayer K.F.X."/>
            <person name="Rudd S."/>
            <person name="Schoof H."/>
            <person name="Schueller C."/>
            <person name="Zaccaria P."/>
            <person name="Mewes H.-W."/>
            <person name="Bevan M."/>
            <person name="Fransz P.F."/>
        </authorList>
    </citation>
    <scope>NUCLEOTIDE SEQUENCE [LARGE SCALE GENOMIC DNA]</scope>
    <source>
        <strain>cv. Columbia</strain>
    </source>
</reference>
<reference key="2">
    <citation type="journal article" date="2017" name="Plant J.">
        <title>Araport11: a complete reannotation of the Arabidopsis thaliana reference genome.</title>
        <authorList>
            <person name="Cheng C.Y."/>
            <person name="Krishnakumar V."/>
            <person name="Chan A.P."/>
            <person name="Thibaud-Nissen F."/>
            <person name="Schobel S."/>
            <person name="Town C.D."/>
        </authorList>
    </citation>
    <scope>GENOME REANNOTATION</scope>
    <source>
        <strain>cv. Columbia</strain>
    </source>
</reference>
<reference key="3">
    <citation type="journal article" date="2006" name="Plant Biotechnol. J.">
        <title>Simultaneous high-throughput recombinational cloning of open reading frames in closed and open configurations.</title>
        <authorList>
            <person name="Underwood B.A."/>
            <person name="Vanderhaeghen R."/>
            <person name="Whitford R."/>
            <person name="Town C.D."/>
            <person name="Hilson P."/>
        </authorList>
    </citation>
    <scope>NUCLEOTIDE SEQUENCE [LARGE SCALE MRNA]</scope>
    <source>
        <strain>cv. Columbia</strain>
    </source>
</reference>
<reference key="4">
    <citation type="submission" date="2005-03" db="EMBL/GenBank/DDBJ databases">
        <title>Large-scale analysis of RIKEN Arabidopsis full-length (RAFL) cDNAs.</title>
        <authorList>
            <person name="Totoki Y."/>
            <person name="Seki M."/>
            <person name="Ishida J."/>
            <person name="Nakajima M."/>
            <person name="Enju A."/>
            <person name="Kamiya A."/>
            <person name="Narusaka M."/>
            <person name="Shin-i T."/>
            <person name="Nakagawa M."/>
            <person name="Sakamoto N."/>
            <person name="Oishi K."/>
            <person name="Kohara Y."/>
            <person name="Kobayashi M."/>
            <person name="Toyoda A."/>
            <person name="Sakaki Y."/>
            <person name="Sakurai T."/>
            <person name="Iida K."/>
            <person name="Akiyama K."/>
            <person name="Satou M."/>
            <person name="Toyoda T."/>
            <person name="Konagaya A."/>
            <person name="Carninci P."/>
            <person name="Kawai J."/>
            <person name="Hayashizaki Y."/>
            <person name="Shinozaki K."/>
        </authorList>
    </citation>
    <scope>NUCLEOTIDE SEQUENCE [LARGE SCALE MRNA]</scope>
    <source>
        <strain>cv. Columbia</strain>
    </source>
</reference>
<reference key="5">
    <citation type="submission" date="2002-03" db="EMBL/GenBank/DDBJ databases">
        <title>Full-length cDNA from Arabidopsis thaliana.</title>
        <authorList>
            <person name="Brover V.V."/>
            <person name="Troukhan M.E."/>
            <person name="Alexandrov N.A."/>
            <person name="Lu Y.-P."/>
            <person name="Flavell R.B."/>
            <person name="Feldmann K.A."/>
        </authorList>
    </citation>
    <scope>NUCLEOTIDE SEQUENCE [LARGE SCALE MRNA]</scope>
</reference>
<reference key="6">
    <citation type="journal article" date="2007" name="Plant Cell Environ.">
        <title>Characterization and expression analysis of genes encoding alpha and beta carbonic anhydrases in Arabidopsis.</title>
        <authorList>
            <person name="Fabre N."/>
            <person name="Reiter I.M."/>
            <person name="Becuwe-Linka N."/>
            <person name="Genty B."/>
            <person name="Rumeau D."/>
        </authorList>
    </citation>
    <scope>TISSUE SPECIFICITY</scope>
    <scope>INDUCTION BY CO2</scope>
    <scope>GENE FAMILY</scope>
    <scope>NOMENCLATURE</scope>
    <source>
        <strain>cv. Columbia</strain>
    </source>
</reference>
<gene>
    <name type="primary">ACA3</name>
    <name type="ordered locus">At5g04180</name>
    <name type="ORF">F21E1.100</name>
</gene>
<protein>
    <recommendedName>
        <fullName>Alpha carbonic anhydrase 3</fullName>
        <shortName>AtaCA3</shortName>
        <shortName>AtalphaCA3</shortName>
        <ecNumber>4.2.1.1</ecNumber>
    </recommendedName>
    <alternativeName>
        <fullName>Alpha carbonate dehydratase 3</fullName>
    </alternativeName>
</protein>